<feature type="chain" id="PRO_0000349415" description="HTH-type transcriptional regulator ArcR">
    <location>
        <begin position="1"/>
        <end position="234"/>
    </location>
</feature>
<feature type="domain" description="HTH crp-type">
    <location>
        <begin position="155"/>
        <end position="228"/>
    </location>
</feature>
<feature type="DNA-binding region" description="H-T-H motif" evidence="1">
    <location>
        <begin position="188"/>
        <end position="207"/>
    </location>
</feature>
<feature type="binding site">
    <location>
        <begin position="40"/>
        <end position="129"/>
    </location>
    <ligand>
        <name>a nucleoside 3',5'-cyclic phosphate</name>
        <dbReference type="ChEBI" id="CHEBI:58464"/>
    </ligand>
</feature>
<protein>
    <recommendedName>
        <fullName>HTH-type transcriptional regulator ArcR</fullName>
    </recommendedName>
</protein>
<keyword id="KW-0010">Activator</keyword>
<keyword id="KW-0114">cAMP</keyword>
<keyword id="KW-0116">cAMP-binding</keyword>
<keyword id="KW-0963">Cytoplasm</keyword>
<keyword id="KW-0238">DNA-binding</keyword>
<keyword id="KW-0547">Nucleotide-binding</keyword>
<keyword id="KW-0804">Transcription</keyword>
<keyword id="KW-0805">Transcription regulation</keyword>
<evidence type="ECO:0000250" key="1"/>
<organism>
    <name type="scientific">Staphylococcus aureus (strain Newman)</name>
    <dbReference type="NCBI Taxonomy" id="426430"/>
    <lineage>
        <taxon>Bacteria</taxon>
        <taxon>Bacillati</taxon>
        <taxon>Bacillota</taxon>
        <taxon>Bacilli</taxon>
        <taxon>Bacillales</taxon>
        <taxon>Staphylococcaceae</taxon>
        <taxon>Staphylococcus</taxon>
    </lineage>
</organism>
<reference key="1">
    <citation type="journal article" date="2008" name="J. Bacteriol.">
        <title>Genome sequence of Staphylococcus aureus strain Newman and comparative analysis of staphylococcal genomes: polymorphism and evolution of two major pathogenicity islands.</title>
        <authorList>
            <person name="Baba T."/>
            <person name="Bae T."/>
            <person name="Schneewind O."/>
            <person name="Takeuchi F."/>
            <person name="Hiramatsu K."/>
        </authorList>
    </citation>
    <scope>NUCLEOTIDE SEQUENCE [LARGE SCALE GENOMIC DNA]</scope>
    <source>
        <strain>Newman</strain>
    </source>
</reference>
<name>ARCR_STAAE</name>
<sequence>MTENFILGRNNKLEHELKALADYINIPYSILQPYQSECFVRHYTKGQVIYFSPQESSNIYFLIEGNIIREHYNQNGDVYRYFNKEQVLFPISNLFHPKEVNELCTALTDCTVLGLPRELMAFLCKANDDIFLTLFALINDNEQQHMNYNMALTSKFAKDRIIKLICHLCQTVGYDQDEFYEIKQFLTIQLMSDMAGISRETAGHIIHELKDEKLVVKDHKNWLVSKHLFNDVCV</sequence>
<accession>A6QKC0</accession>
<gene>
    <name type="primary">arcR</name>
    <name type="ordered locus">NWMN_2530</name>
</gene>
<comment type="function">
    <text evidence="1">Positively regulates the expression of the arcABDCR operon under anaerobic conditions, thus playing an essential role in arginine catabolism. May also control the expression of genes encoding proteins which are involved in anaerobic metabolism. Can bind cyclic AMP (By similarity).</text>
</comment>
<comment type="subcellular location">
    <subcellularLocation>
        <location evidence="1">Cytoplasm</location>
    </subcellularLocation>
</comment>
<dbReference type="EMBL" id="AP009351">
    <property type="protein sequence ID" value="BAF68802.1"/>
    <property type="molecule type" value="Genomic_DNA"/>
</dbReference>
<dbReference type="RefSeq" id="WP_000138214.1">
    <property type="nucleotide sequence ID" value="NZ_JBBIAE010000005.1"/>
</dbReference>
<dbReference type="SMR" id="A6QKC0"/>
<dbReference type="KEGG" id="sae:NWMN_2530"/>
<dbReference type="HOGENOM" id="CLU_1160528_0_0_9"/>
<dbReference type="Proteomes" id="UP000006386">
    <property type="component" value="Chromosome"/>
</dbReference>
<dbReference type="GO" id="GO:0005737">
    <property type="term" value="C:cytoplasm"/>
    <property type="evidence" value="ECO:0007669"/>
    <property type="project" value="UniProtKB-SubCell"/>
</dbReference>
<dbReference type="GO" id="GO:0030552">
    <property type="term" value="F:cAMP binding"/>
    <property type="evidence" value="ECO:0007669"/>
    <property type="project" value="UniProtKB-KW"/>
</dbReference>
<dbReference type="GO" id="GO:0003677">
    <property type="term" value="F:DNA binding"/>
    <property type="evidence" value="ECO:0007669"/>
    <property type="project" value="UniProtKB-KW"/>
</dbReference>
<dbReference type="GO" id="GO:0006355">
    <property type="term" value="P:regulation of DNA-templated transcription"/>
    <property type="evidence" value="ECO:0007669"/>
    <property type="project" value="InterPro"/>
</dbReference>
<dbReference type="Gene3D" id="2.60.120.10">
    <property type="entry name" value="Jelly Rolls"/>
    <property type="match status" value="1"/>
</dbReference>
<dbReference type="Gene3D" id="1.10.10.10">
    <property type="entry name" value="Winged helix-like DNA-binding domain superfamily/Winged helix DNA-binding domain"/>
    <property type="match status" value="1"/>
</dbReference>
<dbReference type="InterPro" id="IPR000595">
    <property type="entry name" value="cNMP-bd_dom"/>
</dbReference>
<dbReference type="InterPro" id="IPR018490">
    <property type="entry name" value="cNMP-bd_dom_sf"/>
</dbReference>
<dbReference type="InterPro" id="IPR012318">
    <property type="entry name" value="HTH_CRP"/>
</dbReference>
<dbReference type="InterPro" id="IPR014710">
    <property type="entry name" value="RmlC-like_jellyroll"/>
</dbReference>
<dbReference type="InterPro" id="IPR036388">
    <property type="entry name" value="WH-like_DNA-bd_sf"/>
</dbReference>
<dbReference type="InterPro" id="IPR036390">
    <property type="entry name" value="WH_DNA-bd_sf"/>
</dbReference>
<dbReference type="Pfam" id="PF00027">
    <property type="entry name" value="cNMP_binding"/>
    <property type="match status" value="1"/>
</dbReference>
<dbReference type="Pfam" id="PF13545">
    <property type="entry name" value="HTH_Crp_2"/>
    <property type="match status" value="1"/>
</dbReference>
<dbReference type="SUPFAM" id="SSF51206">
    <property type="entry name" value="cAMP-binding domain-like"/>
    <property type="match status" value="1"/>
</dbReference>
<dbReference type="SUPFAM" id="SSF46785">
    <property type="entry name" value="Winged helix' DNA-binding domain"/>
    <property type="match status" value="1"/>
</dbReference>
<proteinExistence type="inferred from homology"/>